<organism>
    <name type="scientific">Pseudopleuronectes americanus</name>
    <name type="common">Winter flounder</name>
    <name type="synonym">Pleuronectes americanus</name>
    <dbReference type="NCBI Taxonomy" id="8265"/>
    <lineage>
        <taxon>Eukaryota</taxon>
        <taxon>Metazoa</taxon>
        <taxon>Chordata</taxon>
        <taxon>Craniata</taxon>
        <taxon>Vertebrata</taxon>
        <taxon>Euteleostomi</taxon>
        <taxon>Actinopterygii</taxon>
        <taxon>Neopterygii</taxon>
        <taxon>Teleostei</taxon>
        <taxon>Neoteleostei</taxon>
        <taxon>Acanthomorphata</taxon>
        <taxon>Carangaria</taxon>
        <taxon>Pleuronectiformes</taxon>
        <taxon>Pleuronectoidei</taxon>
        <taxon>Pleuronectidae</taxon>
        <taxon>Pseudopleuronectes</taxon>
    </lineage>
</organism>
<comment type="function">
    <text evidence="1">Contributes to protect fish blood from freezing at subzero sea water temperatures. Lowers the blood freezing point. Binds to nascent ice crystals and prevents further growth (By similarity).</text>
</comment>
<comment type="subcellular location">
    <subcellularLocation>
        <location evidence="1">Secreted</location>
    </subcellularLocation>
</comment>
<comment type="similarity">
    <text evidence="2">Belongs to the type-I AFP family.</text>
</comment>
<name>ANP4_PSEAM</name>
<feature type="signal peptide">
    <location>
        <begin position="1"/>
        <end position="21"/>
    </location>
</feature>
<feature type="chain" id="PRO_0000001684" description="Ice-structuring protein 4">
    <location>
        <begin position="22"/>
        <end position="85"/>
    </location>
</feature>
<sequence>MRITEANPDPDAKAVPAAAAPSTASDAAAAAAATAATAAAAAAATAATAAAAAAATAATAAKAAALTAANAAAAAAATAAAAARG</sequence>
<proteinExistence type="inferred from homology"/>
<reference key="1">
    <citation type="journal article" date="1981" name="Proc. Natl. Acad. Sci. U.S.A.">
        <title>Molecular cloning and characterization of winter flounder antifreeze cDNA.</title>
        <authorList>
            <person name="Lin Y."/>
            <person name="Gross J.K."/>
        </authorList>
    </citation>
    <scope>NUCLEOTIDE SEQUENCE [MRNA]</scope>
</reference>
<protein>
    <recommendedName>
        <fullName>Ice-structuring protein 4</fullName>
        <shortName>ISP 4</shortName>
    </recommendedName>
    <alternativeName>
        <fullName>Antifreeze peptide 4</fullName>
    </alternativeName>
</protein>
<dbReference type="EMBL" id="J00930">
    <property type="protein sequence ID" value="AAA49467.1"/>
    <property type="molecule type" value="mRNA"/>
</dbReference>
<dbReference type="PIR" id="A03193">
    <property type="entry name" value="FDFL4W"/>
</dbReference>
<dbReference type="SMR" id="P02734"/>
<dbReference type="GO" id="GO:0005576">
    <property type="term" value="C:extracellular region"/>
    <property type="evidence" value="ECO:0007669"/>
    <property type="project" value="UniProtKB-SubCell"/>
</dbReference>
<dbReference type="GO" id="GO:0016172">
    <property type="term" value="F:antifreeze activity"/>
    <property type="evidence" value="ECO:0007669"/>
    <property type="project" value="InterPro"/>
</dbReference>
<dbReference type="InterPro" id="IPR000104">
    <property type="entry name" value="Antifreeze_1"/>
</dbReference>
<dbReference type="PRINTS" id="PR00308">
    <property type="entry name" value="ANTIFREEZEI"/>
</dbReference>
<accession>P02734</accession>
<evidence type="ECO:0000250" key="1"/>
<evidence type="ECO:0000305" key="2"/>
<keyword id="KW-0047">Antifreeze protein</keyword>
<keyword id="KW-0677">Repeat</keyword>
<keyword id="KW-0964">Secreted</keyword>
<keyword id="KW-0732">Signal</keyword>